<name>BIOF_CHRSD</name>
<organism>
    <name type="scientific">Chromohalobacter salexigens (strain ATCC BAA-138 / DSM 3043 / CIP 106854 / NCIMB 13768 / 1H11)</name>
    <dbReference type="NCBI Taxonomy" id="290398"/>
    <lineage>
        <taxon>Bacteria</taxon>
        <taxon>Pseudomonadati</taxon>
        <taxon>Pseudomonadota</taxon>
        <taxon>Gammaproteobacteria</taxon>
        <taxon>Oceanospirillales</taxon>
        <taxon>Halomonadaceae</taxon>
        <taxon>Chromohalobacter</taxon>
    </lineage>
</organism>
<proteinExistence type="inferred from homology"/>
<sequence>MGSRTDPWSARLAKAAEQRHADGGWRQRPTLSDVAPFIDFAGNDYLGLADDPRLAEAQAEAARRLGAGAKASHLVSGHLEIHERLERRLAQLTGRPRALLFSTGYMANLGVLQALCDHHTRVFQDRLNHASLIDGARLAGATSRRFHHRDLEDLERLLARAPDDAPTLVVSDGVFSMDGDVAEVGALAATARRHGAWLMIDDAHGLGVLGEVGDGCVGRAHDRREVPVLVGTLGKALGSAGAFVAGDEALIDHLIQFARPYVYTTAQPPGVAAATLTALDVLEREPERRARLHERSADFRREAGTLGLPLTDSRTPIQPIVLGDNARVMRWAERLARAGLRVGAIRAPTVPKGEARLRITLSATHDDDALDALLEGLATCQREEAA</sequence>
<reference key="1">
    <citation type="journal article" date="2011" name="Stand. Genomic Sci.">
        <title>Complete genome sequence of the halophilic and highly halotolerant Chromohalobacter salexigens type strain (1H11(T)).</title>
        <authorList>
            <person name="Copeland A."/>
            <person name="O'Connor K."/>
            <person name="Lucas S."/>
            <person name="Lapidus A."/>
            <person name="Berry K.W."/>
            <person name="Detter J.C."/>
            <person name="Del Rio T.G."/>
            <person name="Hammon N."/>
            <person name="Dalin E."/>
            <person name="Tice H."/>
            <person name="Pitluck S."/>
            <person name="Bruce D."/>
            <person name="Goodwin L."/>
            <person name="Han C."/>
            <person name="Tapia R."/>
            <person name="Saunders E."/>
            <person name="Schmutz J."/>
            <person name="Brettin T."/>
            <person name="Larimer F."/>
            <person name="Land M."/>
            <person name="Hauser L."/>
            <person name="Vargas C."/>
            <person name="Nieto J.J."/>
            <person name="Kyrpides N.C."/>
            <person name="Ivanova N."/>
            <person name="Goker M."/>
            <person name="Klenk H.P."/>
            <person name="Csonka L.N."/>
            <person name="Woyke T."/>
        </authorList>
    </citation>
    <scope>NUCLEOTIDE SEQUENCE [LARGE SCALE GENOMIC DNA]</scope>
    <source>
        <strain>ATCC BAA-138 / DSM 3043 / CIP 106854 / NCIMB 13768 / 1H11</strain>
    </source>
</reference>
<dbReference type="EC" id="2.3.1.47" evidence="1"/>
<dbReference type="EMBL" id="CP000285">
    <property type="protein sequence ID" value="ABE58522.1"/>
    <property type="molecule type" value="Genomic_DNA"/>
</dbReference>
<dbReference type="RefSeq" id="WP_011506468.1">
    <property type="nucleotide sequence ID" value="NC_007963.1"/>
</dbReference>
<dbReference type="SMR" id="Q1QYD6"/>
<dbReference type="STRING" id="290398.Csal_1166"/>
<dbReference type="GeneID" id="95333913"/>
<dbReference type="KEGG" id="csa:Csal_1166"/>
<dbReference type="eggNOG" id="COG0156">
    <property type="taxonomic scope" value="Bacteria"/>
</dbReference>
<dbReference type="HOGENOM" id="CLU_015846_11_0_6"/>
<dbReference type="OrthoDB" id="9807157at2"/>
<dbReference type="UniPathway" id="UPA00078"/>
<dbReference type="Proteomes" id="UP000000239">
    <property type="component" value="Chromosome"/>
</dbReference>
<dbReference type="GO" id="GO:0008710">
    <property type="term" value="F:8-amino-7-oxononanoate synthase activity"/>
    <property type="evidence" value="ECO:0007669"/>
    <property type="project" value="UniProtKB-UniRule"/>
</dbReference>
<dbReference type="GO" id="GO:0030170">
    <property type="term" value="F:pyridoxal phosphate binding"/>
    <property type="evidence" value="ECO:0007669"/>
    <property type="project" value="UniProtKB-UniRule"/>
</dbReference>
<dbReference type="GO" id="GO:0009102">
    <property type="term" value="P:biotin biosynthetic process"/>
    <property type="evidence" value="ECO:0007669"/>
    <property type="project" value="UniProtKB-UniRule"/>
</dbReference>
<dbReference type="CDD" id="cd06454">
    <property type="entry name" value="KBL_like"/>
    <property type="match status" value="1"/>
</dbReference>
<dbReference type="Gene3D" id="3.90.1150.10">
    <property type="entry name" value="Aspartate Aminotransferase, domain 1"/>
    <property type="match status" value="1"/>
</dbReference>
<dbReference type="Gene3D" id="3.40.640.10">
    <property type="entry name" value="Type I PLP-dependent aspartate aminotransferase-like (Major domain)"/>
    <property type="match status" value="1"/>
</dbReference>
<dbReference type="HAMAP" id="MF_01693">
    <property type="entry name" value="BioF_aminotrans_2"/>
    <property type="match status" value="1"/>
</dbReference>
<dbReference type="InterPro" id="IPR001917">
    <property type="entry name" value="Aminotrans_II_pyridoxalP_BS"/>
</dbReference>
<dbReference type="InterPro" id="IPR004839">
    <property type="entry name" value="Aminotransferase_I/II_large"/>
</dbReference>
<dbReference type="InterPro" id="IPR050087">
    <property type="entry name" value="AON_synthase_class-II"/>
</dbReference>
<dbReference type="InterPro" id="IPR004723">
    <property type="entry name" value="AONS_Archaea/Proteobacteria"/>
</dbReference>
<dbReference type="InterPro" id="IPR022834">
    <property type="entry name" value="AONS_Proteobacteria"/>
</dbReference>
<dbReference type="InterPro" id="IPR015424">
    <property type="entry name" value="PyrdxlP-dep_Trfase"/>
</dbReference>
<dbReference type="InterPro" id="IPR015421">
    <property type="entry name" value="PyrdxlP-dep_Trfase_major"/>
</dbReference>
<dbReference type="InterPro" id="IPR015422">
    <property type="entry name" value="PyrdxlP-dep_Trfase_small"/>
</dbReference>
<dbReference type="NCBIfam" id="TIGR00858">
    <property type="entry name" value="bioF"/>
    <property type="match status" value="1"/>
</dbReference>
<dbReference type="PANTHER" id="PTHR13693:SF100">
    <property type="entry name" value="8-AMINO-7-OXONONANOATE SYNTHASE"/>
    <property type="match status" value="1"/>
</dbReference>
<dbReference type="PANTHER" id="PTHR13693">
    <property type="entry name" value="CLASS II AMINOTRANSFERASE/8-AMINO-7-OXONONANOATE SYNTHASE"/>
    <property type="match status" value="1"/>
</dbReference>
<dbReference type="Pfam" id="PF00155">
    <property type="entry name" value="Aminotran_1_2"/>
    <property type="match status" value="1"/>
</dbReference>
<dbReference type="SUPFAM" id="SSF53383">
    <property type="entry name" value="PLP-dependent transferases"/>
    <property type="match status" value="1"/>
</dbReference>
<dbReference type="PROSITE" id="PS00599">
    <property type="entry name" value="AA_TRANSFER_CLASS_2"/>
    <property type="match status" value="1"/>
</dbReference>
<protein>
    <recommendedName>
        <fullName evidence="1">8-amino-7-oxononanoate synthase</fullName>
        <shortName evidence="1">AONS</shortName>
        <ecNumber evidence="1">2.3.1.47</ecNumber>
    </recommendedName>
    <alternativeName>
        <fullName evidence="1">7-keto-8-amino-pelargonic acid synthase</fullName>
        <shortName evidence="1">7-KAP synthase</shortName>
        <shortName evidence="1">KAPA synthase</shortName>
    </alternativeName>
    <alternativeName>
        <fullName evidence="1">8-amino-7-ketopelargonate synthase</fullName>
    </alternativeName>
</protein>
<accession>Q1QYD6</accession>
<gene>
    <name evidence="1" type="primary">bioF</name>
    <name type="ordered locus">Csal_1166</name>
</gene>
<evidence type="ECO:0000255" key="1">
    <source>
        <dbReference type="HAMAP-Rule" id="MF_01693"/>
    </source>
</evidence>
<comment type="function">
    <text evidence="1">Catalyzes the decarboxylative condensation of pimeloyl-[acyl-carrier protein] and L-alanine to produce 8-amino-7-oxononanoate (AON), [acyl-carrier protein], and carbon dioxide.</text>
</comment>
<comment type="catalytic activity">
    <reaction evidence="1">
        <text>6-carboxyhexanoyl-[ACP] + L-alanine + H(+) = (8S)-8-amino-7-oxononanoate + holo-[ACP] + CO2</text>
        <dbReference type="Rhea" id="RHEA:42288"/>
        <dbReference type="Rhea" id="RHEA-COMP:9685"/>
        <dbReference type="Rhea" id="RHEA-COMP:9955"/>
        <dbReference type="ChEBI" id="CHEBI:15378"/>
        <dbReference type="ChEBI" id="CHEBI:16526"/>
        <dbReference type="ChEBI" id="CHEBI:57972"/>
        <dbReference type="ChEBI" id="CHEBI:64479"/>
        <dbReference type="ChEBI" id="CHEBI:78846"/>
        <dbReference type="ChEBI" id="CHEBI:149468"/>
        <dbReference type="EC" id="2.3.1.47"/>
    </reaction>
</comment>
<comment type="cofactor">
    <cofactor evidence="1">
        <name>pyridoxal 5'-phosphate</name>
        <dbReference type="ChEBI" id="CHEBI:597326"/>
    </cofactor>
</comment>
<comment type="pathway">
    <text evidence="1">Cofactor biosynthesis; biotin biosynthesis.</text>
</comment>
<comment type="subunit">
    <text evidence="1">Homodimer.</text>
</comment>
<comment type="similarity">
    <text evidence="1">Belongs to the class-II pyridoxal-phosphate-dependent aminotransferase family. BioF subfamily.</text>
</comment>
<feature type="chain" id="PRO_0000380953" description="8-amino-7-oxononanoate synthase">
    <location>
        <begin position="1"/>
        <end position="386"/>
    </location>
</feature>
<feature type="binding site" evidence="1">
    <location>
        <position position="26"/>
    </location>
    <ligand>
        <name>substrate</name>
    </ligand>
</feature>
<feature type="binding site" evidence="1">
    <location>
        <begin position="104"/>
        <end position="105"/>
    </location>
    <ligand>
        <name>pyridoxal 5'-phosphate</name>
        <dbReference type="ChEBI" id="CHEBI:597326"/>
    </ligand>
</feature>
<feature type="binding site" evidence="1">
    <location>
        <position position="129"/>
    </location>
    <ligand>
        <name>substrate</name>
    </ligand>
</feature>
<feature type="binding site" evidence="1">
    <location>
        <position position="176"/>
    </location>
    <ligand>
        <name>pyridoxal 5'-phosphate</name>
        <dbReference type="ChEBI" id="CHEBI:597326"/>
    </ligand>
</feature>
<feature type="binding site" evidence="1">
    <location>
        <position position="204"/>
    </location>
    <ligand>
        <name>pyridoxal 5'-phosphate</name>
        <dbReference type="ChEBI" id="CHEBI:597326"/>
    </ligand>
</feature>
<feature type="binding site" evidence="1">
    <location>
        <position position="232"/>
    </location>
    <ligand>
        <name>pyridoxal 5'-phosphate</name>
        <dbReference type="ChEBI" id="CHEBI:597326"/>
    </ligand>
</feature>
<feature type="binding site" evidence="1">
    <location>
        <position position="349"/>
    </location>
    <ligand>
        <name>substrate</name>
    </ligand>
</feature>
<feature type="modified residue" description="N6-(pyridoxal phosphate)lysine" evidence="1">
    <location>
        <position position="235"/>
    </location>
</feature>
<keyword id="KW-0093">Biotin biosynthesis</keyword>
<keyword id="KW-0663">Pyridoxal phosphate</keyword>
<keyword id="KW-1185">Reference proteome</keyword>
<keyword id="KW-0808">Transferase</keyword>